<keyword id="KW-0963">Cytoplasm</keyword>
<keyword id="KW-0448">Lipopolysaccharide biosynthesis</keyword>
<keyword id="KW-0548">Nucleotidyltransferase</keyword>
<keyword id="KW-1185">Reference proteome</keyword>
<keyword id="KW-0808">Transferase</keyword>
<evidence type="ECO:0000255" key="1">
    <source>
        <dbReference type="HAMAP-Rule" id="MF_00057"/>
    </source>
</evidence>
<evidence type="ECO:0000305" key="2"/>
<proteinExistence type="inferred from homology"/>
<feature type="chain" id="PRO_0000370035" description="3-deoxy-manno-octulosonate cytidylyltransferase">
    <location>
        <begin position="1"/>
        <end position="263"/>
    </location>
</feature>
<accession>Q63WL5</accession>
<organism>
    <name type="scientific">Burkholderia pseudomallei (strain K96243)</name>
    <dbReference type="NCBI Taxonomy" id="272560"/>
    <lineage>
        <taxon>Bacteria</taxon>
        <taxon>Pseudomonadati</taxon>
        <taxon>Pseudomonadota</taxon>
        <taxon>Betaproteobacteria</taxon>
        <taxon>Burkholderiales</taxon>
        <taxon>Burkholderiaceae</taxon>
        <taxon>Burkholderia</taxon>
        <taxon>pseudomallei group</taxon>
    </lineage>
</organism>
<comment type="function">
    <text evidence="1">Activates KDO (a required 8-carbon sugar) for incorporation into bacterial lipopolysaccharide in Gram-negative bacteria.</text>
</comment>
<comment type="catalytic activity">
    <reaction evidence="1">
        <text>3-deoxy-alpha-D-manno-oct-2-ulosonate + CTP = CMP-3-deoxy-beta-D-manno-octulosonate + diphosphate</text>
        <dbReference type="Rhea" id="RHEA:23448"/>
        <dbReference type="ChEBI" id="CHEBI:33019"/>
        <dbReference type="ChEBI" id="CHEBI:37563"/>
        <dbReference type="ChEBI" id="CHEBI:85986"/>
        <dbReference type="ChEBI" id="CHEBI:85987"/>
        <dbReference type="EC" id="2.7.7.38"/>
    </reaction>
</comment>
<comment type="pathway">
    <text evidence="1">Nucleotide-sugar biosynthesis; CMP-3-deoxy-D-manno-octulosonate biosynthesis; CMP-3-deoxy-D-manno-octulosonate from 3-deoxy-D-manno-octulosonate and CTP: step 1/1.</text>
</comment>
<comment type="pathway">
    <text evidence="1">Bacterial outer membrane biogenesis; lipopolysaccharide biosynthesis.</text>
</comment>
<comment type="subcellular location">
    <subcellularLocation>
        <location evidence="1">Cytoplasm</location>
    </subcellularLocation>
</comment>
<comment type="similarity">
    <text evidence="1">Belongs to the KdsB family.</text>
</comment>
<comment type="sequence caution" evidence="2">
    <conflict type="erroneous initiation">
        <sequence resource="EMBL-CDS" id="CAH34868"/>
    </conflict>
</comment>
<reference key="1">
    <citation type="journal article" date="2004" name="Proc. Natl. Acad. Sci. U.S.A.">
        <title>Genomic plasticity of the causative agent of melioidosis, Burkholderia pseudomallei.</title>
        <authorList>
            <person name="Holden M.T.G."/>
            <person name="Titball R.W."/>
            <person name="Peacock S.J."/>
            <person name="Cerdeno-Tarraga A.-M."/>
            <person name="Atkins T."/>
            <person name="Crossman L.C."/>
            <person name="Pitt T."/>
            <person name="Churcher C."/>
            <person name="Mungall K.L."/>
            <person name="Bentley S.D."/>
            <person name="Sebaihia M."/>
            <person name="Thomson N.R."/>
            <person name="Bason N."/>
            <person name="Beacham I.R."/>
            <person name="Brooks K."/>
            <person name="Brown K.A."/>
            <person name="Brown N.F."/>
            <person name="Challis G.L."/>
            <person name="Cherevach I."/>
            <person name="Chillingworth T."/>
            <person name="Cronin A."/>
            <person name="Crossett B."/>
            <person name="Davis P."/>
            <person name="DeShazer D."/>
            <person name="Feltwell T."/>
            <person name="Fraser A."/>
            <person name="Hance Z."/>
            <person name="Hauser H."/>
            <person name="Holroyd S."/>
            <person name="Jagels K."/>
            <person name="Keith K.E."/>
            <person name="Maddison M."/>
            <person name="Moule S."/>
            <person name="Price C."/>
            <person name="Quail M.A."/>
            <person name="Rabbinowitsch E."/>
            <person name="Rutherford K."/>
            <person name="Sanders M."/>
            <person name="Simmonds M."/>
            <person name="Songsivilai S."/>
            <person name="Stevens K."/>
            <person name="Tumapa S."/>
            <person name="Vesaratchavest M."/>
            <person name="Whitehead S."/>
            <person name="Yeats C."/>
            <person name="Barrell B.G."/>
            <person name="Oyston P.C.F."/>
            <person name="Parkhill J."/>
        </authorList>
    </citation>
    <scope>NUCLEOTIDE SEQUENCE [LARGE SCALE GENOMIC DNA]</scope>
    <source>
        <strain>K96243</strain>
    </source>
</reference>
<sequence>MTSPLPFVAVVPARLASTRLPNKPLADLGGKPMVVRVAERAREAGAQQVLVASDAQRVLDAVREHGFDAVLTRADHPSGTDRLAEVAAKLGFDDDTIVVNVQGDEPLIDPQLVRDVASHLAAHPSCAIATAAHPIHEAHEVFNPNYVKVVLDAHGVALYFSRAPIPWSRDAYLPHWPNVAAMPAPTCPVYRHIGLYAYRARFLRTYPTLAQAPIEAAEQLEQLRAMWHGERIAVRVTEHAPEAGIDTPADLERVQALFRSRAK</sequence>
<protein>
    <recommendedName>
        <fullName evidence="1">3-deoxy-manno-octulosonate cytidylyltransferase</fullName>
        <ecNumber evidence="1">2.7.7.38</ecNumber>
    </recommendedName>
    <alternativeName>
        <fullName evidence="1">CMP-2-keto-3-deoxyoctulosonic acid synthase</fullName>
        <shortName evidence="1">CKS</shortName>
        <shortName evidence="1">CMP-KDO synthase</shortName>
    </alternativeName>
</protein>
<dbReference type="EC" id="2.7.7.38" evidence="1"/>
<dbReference type="EMBL" id="BX571965">
    <property type="protein sequence ID" value="CAH34868.1"/>
    <property type="status" value="ALT_INIT"/>
    <property type="molecule type" value="Genomic_DNA"/>
</dbReference>
<dbReference type="RefSeq" id="WP_004185994.1">
    <property type="nucleotide sequence ID" value="NZ_CP009538.1"/>
</dbReference>
<dbReference type="RefSeq" id="YP_107501.2">
    <property type="nucleotide sequence ID" value="NC_006350.1"/>
</dbReference>
<dbReference type="SMR" id="Q63WL5"/>
<dbReference type="STRING" id="272560.BPSL0876"/>
<dbReference type="GeneID" id="92979969"/>
<dbReference type="KEGG" id="bps:BPSL0876"/>
<dbReference type="PATRIC" id="fig|272560.51.peg.720"/>
<dbReference type="eggNOG" id="COG1212">
    <property type="taxonomic scope" value="Bacteria"/>
</dbReference>
<dbReference type="BRENDA" id="2.7.7.38">
    <property type="organism ID" value="1031"/>
</dbReference>
<dbReference type="UniPathway" id="UPA00030"/>
<dbReference type="UniPathway" id="UPA00358">
    <property type="reaction ID" value="UER00476"/>
</dbReference>
<dbReference type="Proteomes" id="UP000000605">
    <property type="component" value="Chromosome 1"/>
</dbReference>
<dbReference type="GO" id="GO:0005829">
    <property type="term" value="C:cytosol"/>
    <property type="evidence" value="ECO:0007669"/>
    <property type="project" value="TreeGrafter"/>
</dbReference>
<dbReference type="GO" id="GO:0008690">
    <property type="term" value="F:3-deoxy-manno-octulosonate cytidylyltransferase activity"/>
    <property type="evidence" value="ECO:0007669"/>
    <property type="project" value="UniProtKB-UniRule"/>
</dbReference>
<dbReference type="GO" id="GO:0033468">
    <property type="term" value="P:CMP-keto-3-deoxy-D-manno-octulosonic acid biosynthetic process"/>
    <property type="evidence" value="ECO:0007669"/>
    <property type="project" value="UniProtKB-UniRule"/>
</dbReference>
<dbReference type="GO" id="GO:0009103">
    <property type="term" value="P:lipopolysaccharide biosynthetic process"/>
    <property type="evidence" value="ECO:0007669"/>
    <property type="project" value="UniProtKB-UniRule"/>
</dbReference>
<dbReference type="CDD" id="cd02517">
    <property type="entry name" value="CMP-KDO-Synthetase"/>
    <property type="match status" value="1"/>
</dbReference>
<dbReference type="FunFam" id="3.90.550.10:FF:000011">
    <property type="entry name" value="3-deoxy-manno-octulosonate cytidylyltransferase"/>
    <property type="match status" value="1"/>
</dbReference>
<dbReference type="Gene3D" id="3.90.550.10">
    <property type="entry name" value="Spore Coat Polysaccharide Biosynthesis Protein SpsA, Chain A"/>
    <property type="match status" value="1"/>
</dbReference>
<dbReference type="HAMAP" id="MF_00057">
    <property type="entry name" value="KdsB"/>
    <property type="match status" value="1"/>
</dbReference>
<dbReference type="InterPro" id="IPR003329">
    <property type="entry name" value="Cytidylyl_trans"/>
</dbReference>
<dbReference type="InterPro" id="IPR004528">
    <property type="entry name" value="KdsB"/>
</dbReference>
<dbReference type="InterPro" id="IPR029044">
    <property type="entry name" value="Nucleotide-diphossugar_trans"/>
</dbReference>
<dbReference type="NCBIfam" id="TIGR00466">
    <property type="entry name" value="kdsB"/>
    <property type="match status" value="1"/>
</dbReference>
<dbReference type="NCBIfam" id="NF003950">
    <property type="entry name" value="PRK05450.1-3"/>
    <property type="match status" value="1"/>
</dbReference>
<dbReference type="NCBIfam" id="NF003952">
    <property type="entry name" value="PRK05450.1-5"/>
    <property type="match status" value="1"/>
</dbReference>
<dbReference type="NCBIfam" id="NF009905">
    <property type="entry name" value="PRK13368.1"/>
    <property type="match status" value="1"/>
</dbReference>
<dbReference type="PANTHER" id="PTHR42866">
    <property type="entry name" value="3-DEOXY-MANNO-OCTULOSONATE CYTIDYLYLTRANSFERASE"/>
    <property type="match status" value="1"/>
</dbReference>
<dbReference type="PANTHER" id="PTHR42866:SF2">
    <property type="entry name" value="3-DEOXY-MANNO-OCTULOSONATE CYTIDYLYLTRANSFERASE, MITOCHONDRIAL"/>
    <property type="match status" value="1"/>
</dbReference>
<dbReference type="Pfam" id="PF02348">
    <property type="entry name" value="CTP_transf_3"/>
    <property type="match status" value="1"/>
</dbReference>
<dbReference type="SUPFAM" id="SSF53448">
    <property type="entry name" value="Nucleotide-diphospho-sugar transferases"/>
    <property type="match status" value="1"/>
</dbReference>
<gene>
    <name evidence="1" type="primary">kdsB</name>
    <name type="ordered locus">BPSL0876</name>
</gene>
<name>KDSB_BURPS</name>